<proteinExistence type="inferred from homology"/>
<keyword id="KW-0030">Aminoacyl-tRNA synthetase</keyword>
<keyword id="KW-0067">ATP-binding</keyword>
<keyword id="KW-0963">Cytoplasm</keyword>
<keyword id="KW-0436">Ligase</keyword>
<keyword id="KW-0547">Nucleotide-binding</keyword>
<keyword id="KW-0648">Protein biosynthesis</keyword>
<keyword id="KW-1185">Reference proteome</keyword>
<gene>
    <name evidence="1" type="primary">glyQ</name>
    <name type="ordered locus">OCAR_6952</name>
    <name type="ordered locus">OCA5_c11340</name>
</gene>
<feature type="chain" id="PRO_1000101212" description="Glycine--tRNA ligase alpha subunit">
    <location>
        <begin position="1"/>
        <end position="304"/>
    </location>
</feature>
<evidence type="ECO:0000255" key="1">
    <source>
        <dbReference type="HAMAP-Rule" id="MF_00254"/>
    </source>
</evidence>
<sequence length="304" mass="34445">MRPEKSFQGLILTLQRYWADYGCIILQPYDMEVGAGTFHPATTLRALGPKRWNAAYVQPSRRPKDGRYGENPNRLQHYYQFQVILKPSPEDIQDLYLKSLAAIGVDAALHDIRFVEDDWESPTLGAWGLGWECWCDGMEVSQFTYFQQVAGVECAPVAGELTYGLERLAMYVQGVDNVYDLNFNGRDGAEKVTYGDVFLQAEQEYSRHNFEHADTAMLFEQFKMAEGACKKYLDAGWASDKKDKHLMALPAYDQCIKASHVFNLLDARGVISVTERQSYILRVRELAKACGEAWIHTEAGGVRG</sequence>
<dbReference type="EC" id="6.1.1.14" evidence="1"/>
<dbReference type="EMBL" id="CP001196">
    <property type="protein sequence ID" value="ACI94060.1"/>
    <property type="molecule type" value="Genomic_DNA"/>
</dbReference>
<dbReference type="EMBL" id="CP002826">
    <property type="protein sequence ID" value="AEI05853.1"/>
    <property type="molecule type" value="Genomic_DNA"/>
</dbReference>
<dbReference type="SMR" id="B6JEV8"/>
<dbReference type="STRING" id="504832.OCA5_c11340"/>
<dbReference type="KEGG" id="oca:OCAR_6952"/>
<dbReference type="KEGG" id="ocg:OCA5_c11340"/>
<dbReference type="PATRIC" id="fig|504832.7.peg.1206"/>
<dbReference type="eggNOG" id="COG0752">
    <property type="taxonomic scope" value="Bacteria"/>
</dbReference>
<dbReference type="HOGENOM" id="CLU_057066_1_0_5"/>
<dbReference type="Proteomes" id="UP000007730">
    <property type="component" value="Chromosome"/>
</dbReference>
<dbReference type="GO" id="GO:0005829">
    <property type="term" value="C:cytosol"/>
    <property type="evidence" value="ECO:0007669"/>
    <property type="project" value="TreeGrafter"/>
</dbReference>
<dbReference type="GO" id="GO:0005524">
    <property type="term" value="F:ATP binding"/>
    <property type="evidence" value="ECO:0007669"/>
    <property type="project" value="UniProtKB-UniRule"/>
</dbReference>
<dbReference type="GO" id="GO:0004820">
    <property type="term" value="F:glycine-tRNA ligase activity"/>
    <property type="evidence" value="ECO:0007669"/>
    <property type="project" value="UniProtKB-UniRule"/>
</dbReference>
<dbReference type="GO" id="GO:0006426">
    <property type="term" value="P:glycyl-tRNA aminoacylation"/>
    <property type="evidence" value="ECO:0007669"/>
    <property type="project" value="UniProtKB-UniRule"/>
</dbReference>
<dbReference type="CDD" id="cd00733">
    <property type="entry name" value="GlyRS_alpha_core"/>
    <property type="match status" value="1"/>
</dbReference>
<dbReference type="FunFam" id="3.30.930.10:FF:000006">
    <property type="entry name" value="Glycine--tRNA ligase alpha subunit"/>
    <property type="match status" value="1"/>
</dbReference>
<dbReference type="Gene3D" id="3.30.930.10">
    <property type="entry name" value="Bira Bifunctional Protein, Domain 2"/>
    <property type="match status" value="1"/>
</dbReference>
<dbReference type="Gene3D" id="1.20.58.180">
    <property type="entry name" value="Class II aaRS and biotin synthetases, domain 2"/>
    <property type="match status" value="1"/>
</dbReference>
<dbReference type="HAMAP" id="MF_00254">
    <property type="entry name" value="Gly_tRNA_synth_alpha"/>
    <property type="match status" value="1"/>
</dbReference>
<dbReference type="InterPro" id="IPR045864">
    <property type="entry name" value="aa-tRNA-synth_II/BPL/LPL"/>
</dbReference>
<dbReference type="InterPro" id="IPR006194">
    <property type="entry name" value="Gly-tRNA-synth_heterodimer"/>
</dbReference>
<dbReference type="InterPro" id="IPR002310">
    <property type="entry name" value="Gly-tRNA_ligase_asu"/>
</dbReference>
<dbReference type="NCBIfam" id="TIGR00388">
    <property type="entry name" value="glyQ"/>
    <property type="match status" value="1"/>
</dbReference>
<dbReference type="NCBIfam" id="NF006827">
    <property type="entry name" value="PRK09348.1"/>
    <property type="match status" value="1"/>
</dbReference>
<dbReference type="PANTHER" id="PTHR30075:SF2">
    <property type="entry name" value="GLYCINE--TRNA LIGASE, CHLOROPLASTIC_MITOCHONDRIAL 2"/>
    <property type="match status" value="1"/>
</dbReference>
<dbReference type="PANTHER" id="PTHR30075">
    <property type="entry name" value="GLYCYL-TRNA SYNTHETASE"/>
    <property type="match status" value="1"/>
</dbReference>
<dbReference type="Pfam" id="PF02091">
    <property type="entry name" value="tRNA-synt_2e"/>
    <property type="match status" value="1"/>
</dbReference>
<dbReference type="PRINTS" id="PR01044">
    <property type="entry name" value="TRNASYNTHGA"/>
</dbReference>
<dbReference type="SUPFAM" id="SSF55681">
    <property type="entry name" value="Class II aaRS and biotin synthetases"/>
    <property type="match status" value="1"/>
</dbReference>
<dbReference type="PROSITE" id="PS50861">
    <property type="entry name" value="AA_TRNA_LIGASE_II_GLYAB"/>
    <property type="match status" value="1"/>
</dbReference>
<accession>B6JEV8</accession>
<accession>F8BUA1</accession>
<reference key="1">
    <citation type="journal article" date="2008" name="J. Bacteriol.">
        <title>Genome sequence of the chemolithoautotrophic bacterium Oligotropha carboxidovorans OM5T.</title>
        <authorList>
            <person name="Paul D."/>
            <person name="Bridges S."/>
            <person name="Burgess S.C."/>
            <person name="Dandass Y."/>
            <person name="Lawrence M.L."/>
        </authorList>
    </citation>
    <scope>NUCLEOTIDE SEQUENCE [LARGE SCALE GENOMIC DNA]</scope>
    <source>
        <strain>ATCC 49405 / DSM 1227 / KCTC 32145 / OM5</strain>
    </source>
</reference>
<reference key="2">
    <citation type="journal article" date="2011" name="J. Bacteriol.">
        <title>Complete genome sequences of the chemolithoautotrophic Oligotropha carboxidovorans strains OM4 and OM5.</title>
        <authorList>
            <person name="Volland S."/>
            <person name="Rachinger M."/>
            <person name="Strittmatter A."/>
            <person name="Daniel R."/>
            <person name="Gottschalk G."/>
            <person name="Meyer O."/>
        </authorList>
    </citation>
    <scope>NUCLEOTIDE SEQUENCE [LARGE SCALE GENOMIC DNA]</scope>
    <source>
        <strain>ATCC 49405 / DSM 1227 / KCTC 32145 / OM5</strain>
    </source>
</reference>
<comment type="catalytic activity">
    <reaction evidence="1">
        <text>tRNA(Gly) + glycine + ATP = glycyl-tRNA(Gly) + AMP + diphosphate</text>
        <dbReference type="Rhea" id="RHEA:16013"/>
        <dbReference type="Rhea" id="RHEA-COMP:9664"/>
        <dbReference type="Rhea" id="RHEA-COMP:9683"/>
        <dbReference type="ChEBI" id="CHEBI:30616"/>
        <dbReference type="ChEBI" id="CHEBI:33019"/>
        <dbReference type="ChEBI" id="CHEBI:57305"/>
        <dbReference type="ChEBI" id="CHEBI:78442"/>
        <dbReference type="ChEBI" id="CHEBI:78522"/>
        <dbReference type="ChEBI" id="CHEBI:456215"/>
        <dbReference type="EC" id="6.1.1.14"/>
    </reaction>
</comment>
<comment type="subunit">
    <text evidence="1">Tetramer of two alpha and two beta subunits.</text>
</comment>
<comment type="subcellular location">
    <subcellularLocation>
        <location evidence="1">Cytoplasm</location>
    </subcellularLocation>
</comment>
<comment type="similarity">
    <text evidence="1">Belongs to the class-II aminoacyl-tRNA synthetase family.</text>
</comment>
<organism>
    <name type="scientific">Afipia carboxidovorans (strain ATCC 49405 / DSM 1227 / KCTC 32145 / OM5)</name>
    <name type="common">Oligotropha carboxidovorans</name>
    <dbReference type="NCBI Taxonomy" id="504832"/>
    <lineage>
        <taxon>Bacteria</taxon>
        <taxon>Pseudomonadati</taxon>
        <taxon>Pseudomonadota</taxon>
        <taxon>Alphaproteobacteria</taxon>
        <taxon>Hyphomicrobiales</taxon>
        <taxon>Nitrobacteraceae</taxon>
        <taxon>Afipia</taxon>
    </lineage>
</organism>
<name>SYGA_AFIC5</name>
<protein>
    <recommendedName>
        <fullName evidence="1">Glycine--tRNA ligase alpha subunit</fullName>
        <ecNumber evidence="1">6.1.1.14</ecNumber>
    </recommendedName>
    <alternativeName>
        <fullName evidence="1">Glycyl-tRNA synthetase alpha subunit</fullName>
        <shortName evidence="1">GlyRS</shortName>
    </alternativeName>
</protein>